<keyword id="KW-0963">Cytoplasm</keyword>
<keyword id="KW-0460">Magnesium</keyword>
<keyword id="KW-0479">Metal-binding</keyword>
<keyword id="KW-0566">Pantothenate biosynthesis</keyword>
<keyword id="KW-0808">Transferase</keyword>
<gene>
    <name evidence="1" type="primary">panB</name>
    <name type="ordered locus">Sputw3181_0811</name>
</gene>
<name>PANB_SHESW</name>
<comment type="function">
    <text evidence="1">Catalyzes the reversible reaction in which hydroxymethyl group from 5,10-methylenetetrahydrofolate is transferred onto alpha-ketoisovalerate to form ketopantoate.</text>
</comment>
<comment type="catalytic activity">
    <reaction evidence="1">
        <text>3-methyl-2-oxobutanoate + (6R)-5,10-methylene-5,6,7,8-tetrahydrofolate + H2O = 2-dehydropantoate + (6S)-5,6,7,8-tetrahydrofolate</text>
        <dbReference type="Rhea" id="RHEA:11824"/>
        <dbReference type="ChEBI" id="CHEBI:11561"/>
        <dbReference type="ChEBI" id="CHEBI:11851"/>
        <dbReference type="ChEBI" id="CHEBI:15377"/>
        <dbReference type="ChEBI" id="CHEBI:15636"/>
        <dbReference type="ChEBI" id="CHEBI:57453"/>
        <dbReference type="EC" id="2.1.2.11"/>
    </reaction>
</comment>
<comment type="cofactor">
    <cofactor evidence="1">
        <name>Mg(2+)</name>
        <dbReference type="ChEBI" id="CHEBI:18420"/>
    </cofactor>
    <text evidence="1">Binds 1 Mg(2+) ion per subunit.</text>
</comment>
<comment type="pathway">
    <text evidence="1">Cofactor biosynthesis; (R)-pantothenate biosynthesis; (R)-pantoate from 3-methyl-2-oxobutanoate: step 1/2.</text>
</comment>
<comment type="subunit">
    <text evidence="1">Homodecamer; pentamer of dimers.</text>
</comment>
<comment type="subcellular location">
    <subcellularLocation>
        <location evidence="1">Cytoplasm</location>
    </subcellularLocation>
</comment>
<comment type="similarity">
    <text evidence="1">Belongs to the PanB family.</text>
</comment>
<feature type="chain" id="PRO_0000297374" description="3-methyl-2-oxobutanoate hydroxymethyltransferase">
    <location>
        <begin position="1"/>
        <end position="264"/>
    </location>
</feature>
<feature type="active site" description="Proton acceptor" evidence="1">
    <location>
        <position position="181"/>
    </location>
</feature>
<feature type="binding site" evidence="1">
    <location>
        <begin position="45"/>
        <end position="46"/>
    </location>
    <ligand>
        <name>3-methyl-2-oxobutanoate</name>
        <dbReference type="ChEBI" id="CHEBI:11851"/>
    </ligand>
</feature>
<feature type="binding site" evidence="1">
    <location>
        <position position="45"/>
    </location>
    <ligand>
        <name>Mg(2+)</name>
        <dbReference type="ChEBI" id="CHEBI:18420"/>
    </ligand>
</feature>
<feature type="binding site" evidence="1">
    <location>
        <position position="84"/>
    </location>
    <ligand>
        <name>3-methyl-2-oxobutanoate</name>
        <dbReference type="ChEBI" id="CHEBI:11851"/>
    </ligand>
</feature>
<feature type="binding site" evidence="1">
    <location>
        <position position="84"/>
    </location>
    <ligand>
        <name>Mg(2+)</name>
        <dbReference type="ChEBI" id="CHEBI:18420"/>
    </ligand>
</feature>
<feature type="binding site" evidence="1">
    <location>
        <position position="112"/>
    </location>
    <ligand>
        <name>3-methyl-2-oxobutanoate</name>
        <dbReference type="ChEBI" id="CHEBI:11851"/>
    </ligand>
</feature>
<feature type="binding site" evidence="1">
    <location>
        <position position="114"/>
    </location>
    <ligand>
        <name>Mg(2+)</name>
        <dbReference type="ChEBI" id="CHEBI:18420"/>
    </ligand>
</feature>
<dbReference type="EC" id="2.1.2.11" evidence="1"/>
<dbReference type="EMBL" id="CP000503">
    <property type="protein sequence ID" value="ABM23662.1"/>
    <property type="molecule type" value="Genomic_DNA"/>
</dbReference>
<dbReference type="RefSeq" id="WP_011788190.1">
    <property type="nucleotide sequence ID" value="NC_008750.1"/>
</dbReference>
<dbReference type="SMR" id="A1RG67"/>
<dbReference type="GeneID" id="67444714"/>
<dbReference type="KEGG" id="shw:Sputw3181_0811"/>
<dbReference type="HOGENOM" id="CLU_036645_1_0_6"/>
<dbReference type="UniPathway" id="UPA00028">
    <property type="reaction ID" value="UER00003"/>
</dbReference>
<dbReference type="Proteomes" id="UP000002597">
    <property type="component" value="Chromosome"/>
</dbReference>
<dbReference type="GO" id="GO:0005737">
    <property type="term" value="C:cytoplasm"/>
    <property type="evidence" value="ECO:0007669"/>
    <property type="project" value="UniProtKB-SubCell"/>
</dbReference>
<dbReference type="GO" id="GO:0003864">
    <property type="term" value="F:3-methyl-2-oxobutanoate hydroxymethyltransferase activity"/>
    <property type="evidence" value="ECO:0007669"/>
    <property type="project" value="UniProtKB-UniRule"/>
</dbReference>
<dbReference type="GO" id="GO:0000287">
    <property type="term" value="F:magnesium ion binding"/>
    <property type="evidence" value="ECO:0007669"/>
    <property type="project" value="TreeGrafter"/>
</dbReference>
<dbReference type="GO" id="GO:0015940">
    <property type="term" value="P:pantothenate biosynthetic process"/>
    <property type="evidence" value="ECO:0007669"/>
    <property type="project" value="UniProtKB-UniRule"/>
</dbReference>
<dbReference type="CDD" id="cd06557">
    <property type="entry name" value="KPHMT-like"/>
    <property type="match status" value="1"/>
</dbReference>
<dbReference type="FunFam" id="3.20.20.60:FF:000003">
    <property type="entry name" value="3-methyl-2-oxobutanoate hydroxymethyltransferase"/>
    <property type="match status" value="1"/>
</dbReference>
<dbReference type="Gene3D" id="3.20.20.60">
    <property type="entry name" value="Phosphoenolpyruvate-binding domains"/>
    <property type="match status" value="1"/>
</dbReference>
<dbReference type="HAMAP" id="MF_00156">
    <property type="entry name" value="PanB"/>
    <property type="match status" value="1"/>
</dbReference>
<dbReference type="InterPro" id="IPR003700">
    <property type="entry name" value="Pantoate_hydroxy_MeTrfase"/>
</dbReference>
<dbReference type="InterPro" id="IPR015813">
    <property type="entry name" value="Pyrv/PenolPyrv_kinase-like_dom"/>
</dbReference>
<dbReference type="InterPro" id="IPR040442">
    <property type="entry name" value="Pyrv_kinase-like_dom_sf"/>
</dbReference>
<dbReference type="NCBIfam" id="TIGR00222">
    <property type="entry name" value="panB"/>
    <property type="match status" value="1"/>
</dbReference>
<dbReference type="NCBIfam" id="NF001452">
    <property type="entry name" value="PRK00311.1"/>
    <property type="match status" value="1"/>
</dbReference>
<dbReference type="PANTHER" id="PTHR20881">
    <property type="entry name" value="3-METHYL-2-OXOBUTANOATE HYDROXYMETHYLTRANSFERASE"/>
    <property type="match status" value="1"/>
</dbReference>
<dbReference type="PANTHER" id="PTHR20881:SF0">
    <property type="entry name" value="3-METHYL-2-OXOBUTANOATE HYDROXYMETHYLTRANSFERASE"/>
    <property type="match status" value="1"/>
</dbReference>
<dbReference type="Pfam" id="PF02548">
    <property type="entry name" value="Pantoate_transf"/>
    <property type="match status" value="1"/>
</dbReference>
<dbReference type="PIRSF" id="PIRSF000388">
    <property type="entry name" value="Pantoate_hydroxy_MeTrfase"/>
    <property type="match status" value="1"/>
</dbReference>
<dbReference type="SUPFAM" id="SSF51621">
    <property type="entry name" value="Phosphoenolpyruvate/pyruvate domain"/>
    <property type="match status" value="1"/>
</dbReference>
<proteinExistence type="inferred from homology"/>
<accession>A1RG67</accession>
<organism>
    <name type="scientific">Shewanella sp. (strain W3-18-1)</name>
    <dbReference type="NCBI Taxonomy" id="351745"/>
    <lineage>
        <taxon>Bacteria</taxon>
        <taxon>Pseudomonadati</taxon>
        <taxon>Pseudomonadota</taxon>
        <taxon>Gammaproteobacteria</taxon>
        <taxon>Alteromonadales</taxon>
        <taxon>Shewanellaceae</taxon>
        <taxon>Shewanella</taxon>
    </lineage>
</organism>
<protein>
    <recommendedName>
        <fullName evidence="1">3-methyl-2-oxobutanoate hydroxymethyltransferase</fullName>
        <ecNumber evidence="1">2.1.2.11</ecNumber>
    </recommendedName>
    <alternativeName>
        <fullName evidence="1">Ketopantoate hydroxymethyltransferase</fullName>
        <shortName evidence="1">KPHMT</shortName>
    </alternativeName>
</protein>
<evidence type="ECO:0000255" key="1">
    <source>
        <dbReference type="HAMAP-Rule" id="MF_00156"/>
    </source>
</evidence>
<reference key="1">
    <citation type="submission" date="2006-12" db="EMBL/GenBank/DDBJ databases">
        <title>Complete sequence of Shewanella sp. W3-18-1.</title>
        <authorList>
            <consortium name="US DOE Joint Genome Institute"/>
            <person name="Copeland A."/>
            <person name="Lucas S."/>
            <person name="Lapidus A."/>
            <person name="Barry K."/>
            <person name="Detter J.C."/>
            <person name="Glavina del Rio T."/>
            <person name="Hammon N."/>
            <person name="Israni S."/>
            <person name="Dalin E."/>
            <person name="Tice H."/>
            <person name="Pitluck S."/>
            <person name="Chain P."/>
            <person name="Malfatti S."/>
            <person name="Shin M."/>
            <person name="Vergez L."/>
            <person name="Schmutz J."/>
            <person name="Larimer F."/>
            <person name="Land M."/>
            <person name="Hauser L."/>
            <person name="Kyrpides N."/>
            <person name="Lykidis A."/>
            <person name="Tiedje J."/>
            <person name="Richardson P."/>
        </authorList>
    </citation>
    <scope>NUCLEOTIDE SEQUENCE [LARGE SCALE GENOMIC DNA]</scope>
    <source>
        <strain>W3-18-1</strain>
    </source>
</reference>
<sequence>MSKITSSTLLKYKQEGRKFTALTAYDASFAGAFDSEGVDVLLVGDSLGMVLQGHDDTLPVTTAEIAYHTRCVRRGIERALLIADMPFMSYATPEQAMINATELMQAGANMVKVEGGHWLLETVTKLTERGIPVCAHLGLTPQSVHVFGGFKVQGRDAENAQRILDEAKALEAAGAQLLVVECIPAPLATAITQALTIPVIGIGAGASTDGQILVMHDVLGISSGYIPRFSKNYLKQTGEIRSAVRAYIEEVAAGTFPSAEHTFS</sequence>